<keyword id="KW-0002">3D-structure</keyword>
<keyword id="KW-0007">Acetylation</keyword>
<keyword id="KW-0963">Cytoplasm</keyword>
<keyword id="KW-0967">Endosome</keyword>
<keyword id="KW-0539">Nucleus</keyword>
<keyword id="KW-0597">Phosphoprotein</keyword>
<keyword id="KW-1185">Reference proteome</keyword>
<keyword id="KW-0677">Repeat</keyword>
<keyword id="KW-0727">SH2 domain</keyword>
<keyword id="KW-0728">SH3 domain</keyword>
<protein>
    <recommendedName>
        <fullName>GRB2-related adaptor protein 2</fullName>
    </recommendedName>
    <alternativeName>
        <fullName>Adapter protein GRID</fullName>
    </alternativeName>
    <alternativeName>
        <fullName>GADS protein</fullName>
    </alternativeName>
    <alternativeName>
        <fullName>GRB-2-like protein</fullName>
        <shortName>GRB2L</shortName>
    </alternativeName>
    <alternativeName>
        <fullName>GRB-2-related monocytic adapter protein</fullName>
        <shortName>MONA</shortName>
        <shortName>Monocytic adapter</shortName>
    </alternativeName>
    <alternativeName>
        <fullName>GRBLG</fullName>
    </alternativeName>
    <alternativeName>
        <fullName>Growth factor receptor-binding protein</fullName>
    </alternativeName>
    <alternativeName>
        <fullName>Hematopoietic cell-associated adaptor protein GrpL</fullName>
    </alternativeName>
</protein>
<evidence type="ECO:0000250" key="1"/>
<evidence type="ECO:0000250" key="2">
    <source>
        <dbReference type="UniProtKB" id="O75791"/>
    </source>
</evidence>
<evidence type="ECO:0000255" key="3">
    <source>
        <dbReference type="PROSITE-ProRule" id="PRU00191"/>
    </source>
</evidence>
<evidence type="ECO:0000255" key="4">
    <source>
        <dbReference type="PROSITE-ProRule" id="PRU00192"/>
    </source>
</evidence>
<evidence type="ECO:0000256" key="5">
    <source>
        <dbReference type="SAM" id="MobiDB-lite"/>
    </source>
</evidence>
<evidence type="ECO:0000269" key="6">
    <source>
    </source>
</evidence>
<evidence type="ECO:0000305" key="7"/>
<evidence type="ECO:0007744" key="8">
    <source>
    </source>
</evidence>
<evidence type="ECO:0007829" key="9">
    <source>
        <dbReference type="PDB" id="1H3H"/>
    </source>
</evidence>
<evidence type="ECO:0007829" key="10">
    <source>
        <dbReference type="PDB" id="1R1P"/>
    </source>
</evidence>
<evidence type="ECO:0007829" key="11">
    <source>
        <dbReference type="PDB" id="1UTI"/>
    </source>
</evidence>
<feature type="chain" id="PRO_0000088209" description="GRB2-related adaptor protein 2">
    <location>
        <begin position="1"/>
        <end position="322"/>
    </location>
</feature>
<feature type="domain" description="SH3 1" evidence="4">
    <location>
        <begin position="1"/>
        <end position="56"/>
    </location>
</feature>
<feature type="domain" description="SH2" evidence="3">
    <location>
        <begin position="58"/>
        <end position="149"/>
    </location>
</feature>
<feature type="domain" description="SH3 2" evidence="4">
    <location>
        <begin position="263"/>
        <end position="322"/>
    </location>
</feature>
<feature type="region of interest" description="Disordered" evidence="5">
    <location>
        <begin position="143"/>
        <end position="216"/>
    </location>
</feature>
<feature type="compositionally biased region" description="Basic and acidic residues" evidence="5">
    <location>
        <begin position="148"/>
        <end position="163"/>
    </location>
</feature>
<feature type="compositionally biased region" description="Low complexity" evidence="5">
    <location>
        <begin position="193"/>
        <end position="204"/>
    </location>
</feature>
<feature type="modified residue" description="Phosphotyrosine" evidence="2">
    <location>
        <position position="45"/>
    </location>
</feature>
<feature type="modified residue" description="N6-acetyllysine" evidence="2">
    <location>
        <position position="106"/>
    </location>
</feature>
<feature type="modified residue" description="Phosphoserine" evidence="8">
    <location>
        <position position="186"/>
    </location>
</feature>
<feature type="modified residue" description="Phosphoserine" evidence="8">
    <location>
        <position position="230"/>
    </location>
</feature>
<feature type="modified residue" description="Phosphothreonine" evidence="8">
    <location>
        <position position="254"/>
    </location>
</feature>
<feature type="turn" evidence="10">
    <location>
        <begin position="54"/>
        <end position="58"/>
    </location>
</feature>
<feature type="helix" evidence="10">
    <location>
        <begin position="65"/>
        <end position="73"/>
    </location>
</feature>
<feature type="strand" evidence="10">
    <location>
        <begin position="79"/>
        <end position="84"/>
    </location>
</feature>
<feature type="strand" evidence="10">
    <location>
        <begin position="86"/>
        <end position="88"/>
    </location>
</feature>
<feature type="strand" evidence="10">
    <location>
        <begin position="92"/>
        <end position="97"/>
    </location>
</feature>
<feature type="strand" evidence="10">
    <location>
        <begin position="99"/>
        <end position="106"/>
    </location>
</feature>
<feature type="strand" evidence="10">
    <location>
        <begin position="115"/>
        <end position="119"/>
    </location>
</feature>
<feature type="strand" evidence="10">
    <location>
        <begin position="121"/>
        <end position="124"/>
    </location>
</feature>
<feature type="helix" evidence="10">
    <location>
        <begin position="125"/>
        <end position="132"/>
    </location>
</feature>
<feature type="strand" evidence="10">
    <location>
        <begin position="137"/>
        <end position="141"/>
    </location>
</feature>
<feature type="strand" evidence="11">
    <location>
        <begin position="267"/>
        <end position="272"/>
    </location>
</feature>
<feature type="strand" evidence="9">
    <location>
        <begin position="278"/>
        <end position="281"/>
    </location>
</feature>
<feature type="strand" evidence="9">
    <location>
        <begin position="286"/>
        <end position="288"/>
    </location>
</feature>
<feature type="strand" evidence="11">
    <location>
        <begin position="289"/>
        <end position="294"/>
    </location>
</feature>
<feature type="strand" evidence="11">
    <location>
        <begin position="297"/>
        <end position="305"/>
    </location>
</feature>
<feature type="strand" evidence="11">
    <location>
        <begin position="308"/>
        <end position="313"/>
    </location>
</feature>
<feature type="helix" evidence="11">
    <location>
        <begin position="314"/>
        <end position="316"/>
    </location>
</feature>
<feature type="strand" evidence="11">
    <location>
        <begin position="317"/>
        <end position="319"/>
    </location>
</feature>
<gene>
    <name type="primary">Grap2</name>
    <name type="synonym">Gads</name>
    <name type="synonym">Grb2l</name>
    <name type="synonym">Grid</name>
    <name type="synonym">Mona</name>
</gene>
<comment type="function">
    <text>Interacts with SLP-76 to regulate NF-AT activation. Binds to tyrosine-phosphorylated shc.</text>
</comment>
<comment type="subunit">
    <text evidence="1 6">Interacts with phosphorylated LAT and LAX1 upon TCR activation. Interacts with SHB. Interacts with PTPN23 (By similarity). Interacts with phosphorylated LIME1 upon TCR activation.</text>
</comment>
<comment type="interaction">
    <interactant intactId="EBI-642151">
        <id>O89100</id>
    </interactant>
    <interactant intactId="EBI-5324248">
        <id>Q60787</id>
        <label>Lcp2</label>
    </interactant>
    <organismsDiffer>false</organismsDiffer>
    <experiments>7</experiments>
</comment>
<comment type="interaction">
    <interactant intactId="EBI-642151">
        <id>O89100</id>
    </interactant>
    <interactant intactId="EBI-4284816">
        <id>Q6PB44</id>
        <label>Ptpn23</label>
    </interactant>
    <organismsDiffer>false</organismsDiffer>
    <experiments>3</experiments>
</comment>
<comment type="interaction">
    <interactant intactId="EBI-642151">
        <id>O89100</id>
    </interactant>
    <interactant intactId="EBI-346946">
        <id>Q13094</id>
        <label>LCP2</label>
    </interactant>
    <organismsDiffer>true</organismsDiffer>
    <experiments>4</experiments>
</comment>
<comment type="interaction">
    <interactant intactId="EBI-642151">
        <id>O89100</id>
    </interactant>
    <interactant intactId="EBI-724478">
        <id>Q9H3S7</id>
        <label>PTPN23</label>
    </interactant>
    <organismsDiffer>true</organismsDiffer>
    <experiments>3</experiments>
</comment>
<comment type="subcellular location">
    <subcellularLocation>
        <location evidence="1">Nucleus</location>
    </subcellularLocation>
    <subcellularLocation>
        <location evidence="1">Cytoplasm</location>
    </subcellularLocation>
    <subcellularLocation>
        <location evidence="1">Endosome</location>
    </subcellularLocation>
</comment>
<comment type="similarity">
    <text evidence="7">Belongs to the GRB2/sem-5/DRK family.</text>
</comment>
<organism>
    <name type="scientific">Mus musculus</name>
    <name type="common">Mouse</name>
    <dbReference type="NCBI Taxonomy" id="10090"/>
    <lineage>
        <taxon>Eukaryota</taxon>
        <taxon>Metazoa</taxon>
        <taxon>Chordata</taxon>
        <taxon>Craniata</taxon>
        <taxon>Vertebrata</taxon>
        <taxon>Euteleostomi</taxon>
        <taxon>Mammalia</taxon>
        <taxon>Eutheria</taxon>
        <taxon>Euarchontoglires</taxon>
        <taxon>Glires</taxon>
        <taxon>Rodentia</taxon>
        <taxon>Myomorpha</taxon>
        <taxon>Muroidea</taxon>
        <taxon>Muridae</taxon>
        <taxon>Murinae</taxon>
        <taxon>Mus</taxon>
        <taxon>Mus</taxon>
    </lineage>
</organism>
<sequence length="322" mass="36810">MEATAKFDFMASGEDELSFRTGDILKILSNQEEWLKAELGSQEGYVPKNFIDIEFPEWFHEGLSRHQAENLLMGKDIGFFIIRASQSSPGDFSISVRHEDDVQHFKVMRDTKGNYFLWTEKFPSLNKLVDYYRTTSISKQKQVFLRDGTQDQGHRGNSLDRRSQGGPHPSGTVGEEIRPSVNRKLSDHLPLGPQQFHPHQQPSPQFTPGPQPPQQQRYLQHFHQDRRGGSLDINDGHCGLGSEVNATLMHRRHTDPVQLQAAGRVRWARALYDFEALEEDELGFRSGEVVEVLDSSNPSWWTGRLHNKLGLFPANYVAPMMR</sequence>
<proteinExistence type="evidence at protein level"/>
<name>GRAP2_MOUSE</name>
<reference key="1">
    <citation type="journal article" date="1998" name="EMBO J.">
        <title>Mona, a novel hematopoietic-specific adaptor interacting with the macrophage colony-stimulating factor receptor, is implicated in monocyte/macrophage development.</title>
        <authorList>
            <person name="Bourette R.P."/>
            <person name="Arnaud S."/>
            <person name="Myles G.M."/>
            <person name="Blanchet J.P."/>
            <person name="Rohrschneider L.R."/>
            <person name="Mouchiroud G."/>
        </authorList>
    </citation>
    <scope>NUCLEOTIDE SEQUENCE [MRNA]</scope>
</reference>
<reference key="2">
    <citation type="journal article" date="1998" name="Oncogene">
        <title>Gads is a novel SH2 and SH3 domain-containing adaptor protein that binds to tyrosine-phosphorylated Shc.</title>
        <authorList>
            <person name="Liu S.K."/>
            <person name="McGlade C.J."/>
        </authorList>
    </citation>
    <scope>NUCLEOTIDE SEQUENCE [MRNA]</scope>
</reference>
<reference key="3">
    <citation type="journal article" date="1999" name="J. Exp. Med.">
        <title>GrpL, a Grb2-related adaptor protein, interacts with SLP-76 to regulate nuclear factor of activated T cell activation.</title>
        <authorList>
            <person name="Law C.-L."/>
            <person name="Ewings M.K."/>
            <person name="Chaudhary P.M."/>
            <person name="Solow S.A."/>
            <person name="Yun T.J."/>
            <person name="Marshall A.J."/>
            <person name="Hood L."/>
            <person name="Clark E.A."/>
        </authorList>
    </citation>
    <scope>NUCLEOTIDE SEQUENCE [MRNA]</scope>
</reference>
<reference key="4">
    <citation type="journal article" date="2000" name="J. Immunol.">
        <title>GRID: a novel Grb-2-related adapter protein that interacts with the activated T cell costimulatory receptor CD28.</title>
        <authorList>
            <person name="Ellis J.H."/>
            <person name="Ashman C."/>
            <person name="Burden M.N."/>
            <person name="Kilpatrick K.E."/>
            <person name="Morse M.A."/>
            <person name="Hamblin P.A."/>
        </authorList>
    </citation>
    <scope>NUCLEOTIDE SEQUENCE [MRNA]</scope>
</reference>
<reference key="5">
    <citation type="submission" date="1998-10" db="EMBL/GenBank/DDBJ databases">
        <title>Cloning of the human and mouse growth factor receptor binding protein like genes.</title>
        <authorList>
            <person name="Kedra D."/>
            <person name="Dumanski J.P."/>
        </authorList>
    </citation>
    <scope>NUCLEOTIDE SEQUENCE [MRNA]</scope>
</reference>
<reference key="6">
    <citation type="journal article" date="2004" name="Genome Res.">
        <title>The status, quality, and expansion of the NIH full-length cDNA project: the Mammalian Gene Collection (MGC).</title>
        <authorList>
            <consortium name="The MGC Project Team"/>
        </authorList>
    </citation>
    <scope>NUCLEOTIDE SEQUENCE [LARGE SCALE MRNA]</scope>
    <source>
        <strain>C57BL/6J</strain>
        <tissue>Thymus</tissue>
    </source>
</reference>
<reference key="7">
    <citation type="journal article" date="2003" name="J. Exp. Med.">
        <title>LIME, a novel transmembrane adaptor protein, associates with p56lck and mediates T cell activation.</title>
        <authorList>
            <person name="Hur E.M."/>
            <person name="Son M."/>
            <person name="Lee O.-H."/>
            <person name="Choi Y.B."/>
            <person name="Park C."/>
            <person name="Lee H."/>
            <person name="Yun Y."/>
        </authorList>
    </citation>
    <scope>INTERACTION WITH LIME1</scope>
</reference>
<reference key="8">
    <citation type="journal article" date="2010" name="Cell">
        <title>A tissue-specific atlas of mouse protein phosphorylation and expression.</title>
        <authorList>
            <person name="Huttlin E.L."/>
            <person name="Jedrychowski M.P."/>
            <person name="Elias J.E."/>
            <person name="Goswami T."/>
            <person name="Rad R."/>
            <person name="Beausoleil S.A."/>
            <person name="Villen J."/>
            <person name="Haas W."/>
            <person name="Sowa M.E."/>
            <person name="Gygi S.P."/>
        </authorList>
    </citation>
    <scope>PHOSPHORYLATION [LARGE SCALE ANALYSIS] AT SER-186; SER-230 AND THR-254</scope>
    <scope>IDENTIFICATION BY MASS SPECTROMETRY [LARGE SCALE ANALYSIS]</scope>
    <source>
        <tissue>Lung</tissue>
        <tissue>Spleen</tissue>
    </source>
</reference>
<dbReference type="EMBL" id="AF055465">
    <property type="protein sequence ID" value="AAD08803.1"/>
    <property type="molecule type" value="mRNA"/>
</dbReference>
<dbReference type="EMBL" id="AF053405">
    <property type="protein sequence ID" value="AAC98669.1"/>
    <property type="molecule type" value="mRNA"/>
</dbReference>
<dbReference type="EMBL" id="AF129477">
    <property type="protein sequence ID" value="AAD41783.1"/>
    <property type="molecule type" value="mRNA"/>
</dbReference>
<dbReference type="EMBL" id="AF236118">
    <property type="protein sequence ID" value="AAF60318.1"/>
    <property type="molecule type" value="mRNA"/>
</dbReference>
<dbReference type="EMBL" id="AJ011735">
    <property type="protein sequence ID" value="CAA09756.1"/>
    <property type="molecule type" value="mRNA"/>
</dbReference>
<dbReference type="EMBL" id="BC052496">
    <property type="protein sequence ID" value="AAH52496.1"/>
    <property type="molecule type" value="mRNA"/>
</dbReference>
<dbReference type="CCDS" id="CCDS27663.1"/>
<dbReference type="RefSeq" id="NP_001276371.1">
    <property type="nucleotide sequence ID" value="NM_001289442.1"/>
</dbReference>
<dbReference type="RefSeq" id="NP_034945.1">
    <property type="nucleotide sequence ID" value="NM_010815.3"/>
</dbReference>
<dbReference type="PDB" id="1H3H">
    <property type="method" value="NMR"/>
    <property type="chains" value="A=263-322"/>
</dbReference>
<dbReference type="PDB" id="1OEB">
    <property type="method" value="X-ray"/>
    <property type="resolution" value="1.76 A"/>
    <property type="chains" value="A/B=265-322"/>
</dbReference>
<dbReference type="PDB" id="1R1P">
    <property type="method" value="X-ray"/>
    <property type="resolution" value="1.80 A"/>
    <property type="chains" value="A/B/C/D=50-147"/>
</dbReference>
<dbReference type="PDB" id="1R1Q">
    <property type="method" value="X-ray"/>
    <property type="resolution" value="1.80 A"/>
    <property type="chains" value="A/B=50-147"/>
</dbReference>
<dbReference type="PDB" id="1R1S">
    <property type="method" value="X-ray"/>
    <property type="resolution" value="1.90 A"/>
    <property type="chains" value="A/C/E/G=50-147"/>
</dbReference>
<dbReference type="PDB" id="1UTI">
    <property type="method" value="X-ray"/>
    <property type="resolution" value="1.50 A"/>
    <property type="chains" value="A=265-322"/>
</dbReference>
<dbReference type="PDB" id="2D0N">
    <property type="method" value="X-ray"/>
    <property type="resolution" value="1.57 A"/>
    <property type="chains" value="A/C=267-322"/>
</dbReference>
<dbReference type="PDB" id="2W10">
    <property type="method" value="X-ray"/>
    <property type="resolution" value="1.90 A"/>
    <property type="chains" value="A/B=265-322"/>
</dbReference>
<dbReference type="PDBsum" id="1H3H"/>
<dbReference type="PDBsum" id="1OEB"/>
<dbReference type="PDBsum" id="1R1P"/>
<dbReference type="PDBsum" id="1R1Q"/>
<dbReference type="PDBsum" id="1R1S"/>
<dbReference type="PDBsum" id="1UTI"/>
<dbReference type="PDBsum" id="2D0N"/>
<dbReference type="PDBsum" id="2W10"/>
<dbReference type="SMR" id="O89100"/>
<dbReference type="BioGRID" id="201466">
    <property type="interactions" value="9"/>
</dbReference>
<dbReference type="DIP" id="DIP-41343N"/>
<dbReference type="FunCoup" id="O89100">
    <property type="interactions" value="1630"/>
</dbReference>
<dbReference type="IntAct" id="O89100">
    <property type="interactions" value="15"/>
</dbReference>
<dbReference type="MINT" id="O89100"/>
<dbReference type="STRING" id="10090.ENSMUSP00000046532"/>
<dbReference type="iPTMnet" id="O89100"/>
<dbReference type="PhosphoSitePlus" id="O89100"/>
<dbReference type="jPOST" id="O89100"/>
<dbReference type="PaxDb" id="10090-ENSMUSP00000046532"/>
<dbReference type="ProteomicsDB" id="271158"/>
<dbReference type="Antibodypedia" id="236">
    <property type="antibodies" value="504 antibodies from 37 providers"/>
</dbReference>
<dbReference type="DNASU" id="17444"/>
<dbReference type="Ensembl" id="ENSMUST00000043149.9">
    <property type="protein sequence ID" value="ENSMUSP00000046532.8"/>
    <property type="gene ID" value="ENSMUSG00000042351.10"/>
</dbReference>
<dbReference type="Ensembl" id="ENSMUST00000229980.2">
    <property type="protein sequence ID" value="ENSMUSP00000155681.2"/>
    <property type="gene ID" value="ENSMUSG00000042351.10"/>
</dbReference>
<dbReference type="GeneID" id="17444"/>
<dbReference type="KEGG" id="mmu:17444"/>
<dbReference type="UCSC" id="uc007wvo.2">
    <property type="organism name" value="mouse"/>
</dbReference>
<dbReference type="AGR" id="MGI:1333842"/>
<dbReference type="CTD" id="9402"/>
<dbReference type="MGI" id="MGI:1333842">
    <property type="gene designation" value="Grap2"/>
</dbReference>
<dbReference type="VEuPathDB" id="HostDB:ENSMUSG00000042351"/>
<dbReference type="eggNOG" id="KOG3601">
    <property type="taxonomic scope" value="Eukaryota"/>
</dbReference>
<dbReference type="GeneTree" id="ENSGT00940000157307"/>
<dbReference type="HOGENOM" id="CLU_073617_0_0_1"/>
<dbReference type="InParanoid" id="O89100"/>
<dbReference type="OMA" id="VAKFDFM"/>
<dbReference type="OrthoDB" id="10255964at2759"/>
<dbReference type="PhylomeDB" id="O89100"/>
<dbReference type="TreeFam" id="TF354288"/>
<dbReference type="Reactome" id="R-MMU-1433557">
    <property type="pathway name" value="Signaling by SCF-KIT"/>
</dbReference>
<dbReference type="Reactome" id="R-MMU-202433">
    <property type="pathway name" value="Generation of second messenger molecules"/>
</dbReference>
<dbReference type="Reactome" id="R-MMU-2424491">
    <property type="pathway name" value="DAP12 signaling"/>
</dbReference>
<dbReference type="Reactome" id="R-MMU-2871796">
    <property type="pathway name" value="FCERI mediated MAPK activation"/>
</dbReference>
<dbReference type="Reactome" id="R-MMU-2871809">
    <property type="pathway name" value="FCERI mediated Ca+2 mobilization"/>
</dbReference>
<dbReference type="Reactome" id="R-MMU-389356">
    <property type="pathway name" value="Co-stimulation by CD28"/>
</dbReference>
<dbReference type="Reactome" id="R-MMU-9607240">
    <property type="pathway name" value="FLT3 Signaling"/>
</dbReference>
<dbReference type="BioGRID-ORCS" id="17444">
    <property type="hits" value="2 hits in 80 CRISPR screens"/>
</dbReference>
<dbReference type="ChiTaRS" id="Grap2">
    <property type="organism name" value="mouse"/>
</dbReference>
<dbReference type="EvolutionaryTrace" id="O89100"/>
<dbReference type="PRO" id="PR:O89100"/>
<dbReference type="Proteomes" id="UP000000589">
    <property type="component" value="Chromosome 15"/>
</dbReference>
<dbReference type="RNAct" id="O89100">
    <property type="molecule type" value="protein"/>
</dbReference>
<dbReference type="Bgee" id="ENSMUSG00000042351">
    <property type="expression patterns" value="Expressed in thymus and 56 other cell types or tissues"/>
</dbReference>
<dbReference type="ExpressionAtlas" id="O89100">
    <property type="expression patterns" value="baseline and differential"/>
</dbReference>
<dbReference type="GO" id="GO:0005737">
    <property type="term" value="C:cytoplasm"/>
    <property type="evidence" value="ECO:0000250"/>
    <property type="project" value="UniProtKB"/>
</dbReference>
<dbReference type="GO" id="GO:0005829">
    <property type="term" value="C:cytosol"/>
    <property type="evidence" value="ECO:0000304"/>
    <property type="project" value="Reactome"/>
</dbReference>
<dbReference type="GO" id="GO:0005768">
    <property type="term" value="C:endosome"/>
    <property type="evidence" value="ECO:0000250"/>
    <property type="project" value="UniProtKB"/>
</dbReference>
<dbReference type="GO" id="GO:0005654">
    <property type="term" value="C:nucleoplasm"/>
    <property type="evidence" value="ECO:0007669"/>
    <property type="project" value="Ensembl"/>
</dbReference>
<dbReference type="GO" id="GO:0005634">
    <property type="term" value="C:nucleus"/>
    <property type="evidence" value="ECO:0000250"/>
    <property type="project" value="UniProtKB"/>
</dbReference>
<dbReference type="GO" id="GO:0005886">
    <property type="term" value="C:plasma membrane"/>
    <property type="evidence" value="ECO:0007669"/>
    <property type="project" value="Ensembl"/>
</dbReference>
<dbReference type="CDD" id="cd09941">
    <property type="entry name" value="SH2_Grb2_like"/>
    <property type="match status" value="1"/>
</dbReference>
<dbReference type="CDD" id="cd11950">
    <property type="entry name" value="SH3_GRAP2_C"/>
    <property type="match status" value="1"/>
</dbReference>
<dbReference type="FunFam" id="2.30.30.40:FF:000181">
    <property type="entry name" value="GRB2-related adapter protein 2"/>
    <property type="match status" value="1"/>
</dbReference>
<dbReference type="Gene3D" id="3.30.505.10">
    <property type="entry name" value="SH2 domain"/>
    <property type="match status" value="1"/>
</dbReference>
<dbReference type="Gene3D" id="2.30.30.40">
    <property type="entry name" value="SH3 Domains"/>
    <property type="match status" value="2"/>
</dbReference>
<dbReference type="IDEAL" id="IID50062"/>
<dbReference type="InterPro" id="IPR035646">
    <property type="entry name" value="GRAP2_C_SH3"/>
</dbReference>
<dbReference type="InterPro" id="IPR043539">
    <property type="entry name" value="Grb2-like"/>
</dbReference>
<dbReference type="InterPro" id="IPR000980">
    <property type="entry name" value="SH2"/>
</dbReference>
<dbReference type="InterPro" id="IPR036860">
    <property type="entry name" value="SH2_dom_sf"/>
</dbReference>
<dbReference type="InterPro" id="IPR036028">
    <property type="entry name" value="SH3-like_dom_sf"/>
</dbReference>
<dbReference type="InterPro" id="IPR001452">
    <property type="entry name" value="SH3_domain"/>
</dbReference>
<dbReference type="PANTHER" id="PTHR46037">
    <property type="entry name" value="PROTEIN ENHANCER OF SEVENLESS 2B"/>
    <property type="match status" value="1"/>
</dbReference>
<dbReference type="Pfam" id="PF00017">
    <property type="entry name" value="SH2"/>
    <property type="match status" value="1"/>
</dbReference>
<dbReference type="Pfam" id="PF00018">
    <property type="entry name" value="SH3_1"/>
    <property type="match status" value="2"/>
</dbReference>
<dbReference type="PRINTS" id="PR00401">
    <property type="entry name" value="SH2DOMAIN"/>
</dbReference>
<dbReference type="PRINTS" id="PR00452">
    <property type="entry name" value="SH3DOMAIN"/>
</dbReference>
<dbReference type="SMART" id="SM00252">
    <property type="entry name" value="SH2"/>
    <property type="match status" value="1"/>
</dbReference>
<dbReference type="SMART" id="SM00326">
    <property type="entry name" value="SH3"/>
    <property type="match status" value="2"/>
</dbReference>
<dbReference type="SUPFAM" id="SSF55550">
    <property type="entry name" value="SH2 domain"/>
    <property type="match status" value="1"/>
</dbReference>
<dbReference type="SUPFAM" id="SSF50044">
    <property type="entry name" value="SH3-domain"/>
    <property type="match status" value="2"/>
</dbReference>
<dbReference type="PROSITE" id="PS50001">
    <property type="entry name" value="SH2"/>
    <property type="match status" value="1"/>
</dbReference>
<dbReference type="PROSITE" id="PS50002">
    <property type="entry name" value="SH3"/>
    <property type="match status" value="2"/>
</dbReference>
<accession>O89100</accession>